<feature type="chain" id="PRO_1000059720" description="Exodeoxyribonuclease 7 small subunit">
    <location>
        <begin position="1"/>
        <end position="70"/>
    </location>
</feature>
<gene>
    <name evidence="1" type="primary">xseB</name>
    <name type="ordered locus">Mmc1_1050</name>
</gene>
<proteinExistence type="inferred from homology"/>
<comment type="function">
    <text evidence="1">Bidirectionally degrades single-stranded DNA into large acid-insoluble oligonucleotides, which are then degraded further into small acid-soluble oligonucleotides.</text>
</comment>
<comment type="catalytic activity">
    <reaction evidence="1">
        <text>Exonucleolytic cleavage in either 5'- to 3'- or 3'- to 5'-direction to yield nucleoside 5'-phosphates.</text>
        <dbReference type="EC" id="3.1.11.6"/>
    </reaction>
</comment>
<comment type="subunit">
    <text evidence="1">Heterooligomer composed of large and small subunits.</text>
</comment>
<comment type="subcellular location">
    <subcellularLocation>
        <location evidence="1">Cytoplasm</location>
    </subcellularLocation>
</comment>
<comment type="similarity">
    <text evidence="1">Belongs to the XseB family.</text>
</comment>
<protein>
    <recommendedName>
        <fullName evidence="1">Exodeoxyribonuclease 7 small subunit</fullName>
        <ecNumber evidence="1">3.1.11.6</ecNumber>
    </recommendedName>
    <alternativeName>
        <fullName evidence="1">Exodeoxyribonuclease VII small subunit</fullName>
        <shortName evidence="1">Exonuclease VII small subunit</shortName>
    </alternativeName>
</protein>
<reference key="1">
    <citation type="journal article" date="2009" name="Appl. Environ. Microbiol.">
        <title>Complete genome sequence of the chemolithoautotrophic marine magnetotactic coccus strain MC-1.</title>
        <authorList>
            <person name="Schubbe S."/>
            <person name="Williams T.J."/>
            <person name="Xie G."/>
            <person name="Kiss H.E."/>
            <person name="Brettin T.S."/>
            <person name="Martinez D."/>
            <person name="Ross C.A."/>
            <person name="Schuler D."/>
            <person name="Cox B.L."/>
            <person name="Nealson K.H."/>
            <person name="Bazylinski D.A."/>
        </authorList>
    </citation>
    <scope>NUCLEOTIDE SEQUENCE [LARGE SCALE GENOMIC DNA]</scope>
    <source>
        <strain>ATCC BAA-1437 / JCM 17883 / MC-1</strain>
    </source>
</reference>
<accession>A0L6H5</accession>
<sequence length="70" mass="7766">MSSDKKQGFEASLERLEALVGELERGELPLEEALAAYEEGMKLARLCQKRLDSAEKRIEKIATPSGDEEA</sequence>
<keyword id="KW-0963">Cytoplasm</keyword>
<keyword id="KW-0269">Exonuclease</keyword>
<keyword id="KW-0378">Hydrolase</keyword>
<keyword id="KW-0540">Nuclease</keyword>
<keyword id="KW-1185">Reference proteome</keyword>
<name>EX7S_MAGMM</name>
<organism>
    <name type="scientific">Magnetococcus marinus (strain ATCC BAA-1437 / JCM 17883 / MC-1)</name>
    <dbReference type="NCBI Taxonomy" id="156889"/>
    <lineage>
        <taxon>Bacteria</taxon>
        <taxon>Pseudomonadati</taxon>
        <taxon>Pseudomonadota</taxon>
        <taxon>Alphaproteobacteria</taxon>
        <taxon>Magnetococcales</taxon>
        <taxon>Magnetococcaceae</taxon>
        <taxon>Magnetococcus</taxon>
    </lineage>
</organism>
<evidence type="ECO:0000255" key="1">
    <source>
        <dbReference type="HAMAP-Rule" id="MF_00337"/>
    </source>
</evidence>
<dbReference type="EC" id="3.1.11.6" evidence="1"/>
<dbReference type="EMBL" id="CP000471">
    <property type="protein sequence ID" value="ABK43568.1"/>
    <property type="molecule type" value="Genomic_DNA"/>
</dbReference>
<dbReference type="RefSeq" id="WP_011712725.1">
    <property type="nucleotide sequence ID" value="NC_008576.1"/>
</dbReference>
<dbReference type="SMR" id="A0L6H5"/>
<dbReference type="STRING" id="156889.Mmc1_1050"/>
<dbReference type="KEGG" id="mgm:Mmc1_1050"/>
<dbReference type="eggNOG" id="COG1722">
    <property type="taxonomic scope" value="Bacteria"/>
</dbReference>
<dbReference type="HOGENOM" id="CLU_145918_3_2_5"/>
<dbReference type="Proteomes" id="UP000002586">
    <property type="component" value="Chromosome"/>
</dbReference>
<dbReference type="GO" id="GO:0005829">
    <property type="term" value="C:cytosol"/>
    <property type="evidence" value="ECO:0007669"/>
    <property type="project" value="TreeGrafter"/>
</dbReference>
<dbReference type="GO" id="GO:0009318">
    <property type="term" value="C:exodeoxyribonuclease VII complex"/>
    <property type="evidence" value="ECO:0007669"/>
    <property type="project" value="InterPro"/>
</dbReference>
<dbReference type="GO" id="GO:0008855">
    <property type="term" value="F:exodeoxyribonuclease VII activity"/>
    <property type="evidence" value="ECO:0007669"/>
    <property type="project" value="UniProtKB-UniRule"/>
</dbReference>
<dbReference type="GO" id="GO:0006308">
    <property type="term" value="P:DNA catabolic process"/>
    <property type="evidence" value="ECO:0007669"/>
    <property type="project" value="UniProtKB-UniRule"/>
</dbReference>
<dbReference type="Gene3D" id="1.10.287.1040">
    <property type="entry name" value="Exonuclease VII, small subunit"/>
    <property type="match status" value="1"/>
</dbReference>
<dbReference type="HAMAP" id="MF_00337">
    <property type="entry name" value="Exonuc_7_S"/>
    <property type="match status" value="1"/>
</dbReference>
<dbReference type="InterPro" id="IPR003761">
    <property type="entry name" value="Exonuc_VII_S"/>
</dbReference>
<dbReference type="InterPro" id="IPR037004">
    <property type="entry name" value="Exonuc_VII_ssu_sf"/>
</dbReference>
<dbReference type="NCBIfam" id="NF002140">
    <property type="entry name" value="PRK00977.1-4"/>
    <property type="match status" value="1"/>
</dbReference>
<dbReference type="NCBIfam" id="TIGR01280">
    <property type="entry name" value="xseB"/>
    <property type="match status" value="1"/>
</dbReference>
<dbReference type="PANTHER" id="PTHR34137">
    <property type="entry name" value="EXODEOXYRIBONUCLEASE 7 SMALL SUBUNIT"/>
    <property type="match status" value="1"/>
</dbReference>
<dbReference type="PANTHER" id="PTHR34137:SF1">
    <property type="entry name" value="EXODEOXYRIBONUCLEASE 7 SMALL SUBUNIT"/>
    <property type="match status" value="1"/>
</dbReference>
<dbReference type="Pfam" id="PF02609">
    <property type="entry name" value="Exonuc_VII_S"/>
    <property type="match status" value="1"/>
</dbReference>
<dbReference type="PIRSF" id="PIRSF006488">
    <property type="entry name" value="Exonuc_VII_S"/>
    <property type="match status" value="1"/>
</dbReference>
<dbReference type="SUPFAM" id="SSF116842">
    <property type="entry name" value="XseB-like"/>
    <property type="match status" value="1"/>
</dbReference>